<comment type="function">
    <text evidence="1">Regulatory component of the cyclin D1-CDK4 (DC) complex that phosphorylates and inhibits members of the retinoblastoma (RB) protein family including RB1 and regulates the cell-cycle during G(1)/S transition. Phosphorylation of RB1 allows dissociation of the transcription factor E2F from the RB/E2F complex and the subsequent transcription of E2F target genes which are responsible for the progression through the G(1) phase. Hypophosphorylates RB1 in early G(1) phase. Cyclin D-CDK4 complexes are major integrators of various mitogenenic and antimitogenic signals. Also a substrate for SMAD3, phosphorylating SMAD3 in a cell-cycle-dependent manner and repressing its transcriptional activity. Component of the ternary complex, cyclin D1/CDK4/CDKN1B, required for nuclear translocation and activity of the cyclin D-CDK4 complex. Exhibits transcriptional corepressor activity with INSM1 on the NEUROD1 and INS promoters in a cell cycle-independent manner.</text>
</comment>
<comment type="subunit">
    <text evidence="1 4 7">Interacts with either CDK4 or CDK6 protein kinase to form a serine/threonine kinase holoenzyme complex. The cyclin subunit imparts substrate specificity to the complex. Component of the ternary complex CCND1/CDK4/CDKN1B required for nuclear translocation and modulation of CDK4-mediated kinase activity (By similarity). Interacts directly with CDKN1B (PubMed:19767775, PubMed:8534916). Can form similar complexes with either CDKN1A or CDKN2A (PubMed:8534916). Interacts with UHRF2; the interaction ubiquitinates CCND1 and appears to occur independently of phosphorylation. Interacts with USP2. Interacts (via cyclin N-terminal domain) with INSM1 (via N-terminal region); the interaction competes with the binding of CCND1 to CDK4 during cell cycle progression and inhibits CDK4 activity. Interacts with CDK4; the interaction is prevented with the binding of CCND1 to INSM1 during cell cycle progression (By similarity).</text>
</comment>
<comment type="interaction">
    <interactant intactId="EBI-847243">
        <id>P25322</id>
    </interactant>
    <interactant intactId="EBI-847225">
        <id>P30285</id>
        <label>Cdk4</label>
    </interactant>
    <organismsDiffer>false</organismsDiffer>
    <experiments>15</experiments>
</comment>
<comment type="interaction">
    <interactant intactId="EBI-847243">
        <id>P25322</id>
    </interactant>
    <interactant intactId="EBI-2527009">
        <id>Q8CIG8</id>
        <label>Prmt5</label>
    </interactant>
    <organismsDiffer>false</organismsDiffer>
    <experiments>5</experiments>
</comment>
<comment type="subcellular location">
    <subcellularLocation>
        <location evidence="4">Nucleus</location>
    </subcellularLocation>
    <subcellularLocation>
        <location evidence="1">Cytoplasm</location>
    </subcellularLocation>
    <subcellularLocation>
        <location evidence="1">Nucleus membrane</location>
    </subcellularLocation>
    <text evidence="1">Cyclin D-CDK4 complexes accumulate at the nuclear membrane and are then translocated into the nucleus through interaction with KIP/CIP family members.</text>
</comment>
<comment type="tissue specificity">
    <text evidence="5">Expressed in the intestinal epithelium.</text>
</comment>
<comment type="PTM">
    <text evidence="1">Phosphorylation at Thr-286 by MAP kinases is required for ubiquitination and degradation by the DCX(AMBRA1) complex (By similarity). It also plays an essential role for recognition by the FBXO31 component of SCF (SKP1-cullin-F-box) protein ligase complex following DNA damage (By similarity).</text>
</comment>
<comment type="PTM">
    <text evidence="1 3 4 6">Ubiquitinated at Lys-269 by the DCX(AMBRA1) complex during the transition from G1 to S cell phase, leading to its degradation: ubiquitination is dependent on Thr-286 phosphorylation (PubMed:33854232). The DCX(AMBRA1) complex represents the major regulator of CCND1 stability during the G1/S transition (PubMed:33854232). Also ubiquitinated by the SCF(FBXO4) and Cul7-RING(FBXW8) ubiquitin-protein ligase complexes (PubMed:17081987, PubMed:19767775). Following DNA damage it is ubiquitinated by the SCF(FBXO31) protein ligase complex. SCF(FBXO31) ubiquitination is dependent on Thr-286 phosphorylation. Ubiquitinated also by UHRF2 apparently in a phosphorylation-independent manner. Ubiquitination leads to its degradation and G1 arrest. Deubiquitinated by USP2; leading to its stabilization (By similarity).</text>
</comment>
<comment type="similarity">
    <text evidence="8">Belongs to the cyclin family. Cyclin D subfamily.</text>
</comment>
<sequence>MEHQLLCCEVETIRRAYPDTNLLNDRVLRAMLKTEETCAPSVSYFKCVQKEIVPSMRKIVATWMLEVCEEQKCEEEVFPLAMNYLDRFLSLEPLKKSRLQLLGATCMFVASKMKETIPLTAEKLCIYTDNSIRPEELLQMELLLVNKLKWNLAAMTPHDFIEHFLSKMPEADENKQTIRKHAQTFVALCATDVKFISNPPSMVAAGSVVAAMQGLNLGSPNNFLSCYRTTHFLSRVIKCDPDCLRACQEQIEALLESSLRQAQQNVDPKATEEEGEVEEEAGLACTPTDVRDVDI</sequence>
<organism>
    <name type="scientific">Mus musculus</name>
    <name type="common">Mouse</name>
    <dbReference type="NCBI Taxonomy" id="10090"/>
    <lineage>
        <taxon>Eukaryota</taxon>
        <taxon>Metazoa</taxon>
        <taxon>Chordata</taxon>
        <taxon>Craniata</taxon>
        <taxon>Vertebrata</taxon>
        <taxon>Euteleostomi</taxon>
        <taxon>Mammalia</taxon>
        <taxon>Eutheria</taxon>
        <taxon>Euarchontoglires</taxon>
        <taxon>Glires</taxon>
        <taxon>Rodentia</taxon>
        <taxon>Myomorpha</taxon>
        <taxon>Muroidea</taxon>
        <taxon>Muridae</taxon>
        <taxon>Murinae</taxon>
        <taxon>Mus</taxon>
        <taxon>Mus</taxon>
    </lineage>
</organism>
<accession>P25322</accession>
<name>CCND1_MOUSE</name>
<proteinExistence type="evidence at protein level"/>
<reference key="1">
    <citation type="journal article" date="1991" name="Cell">
        <title>Colony-stimulating factor 1 regulates novel cyclins during the G1 phase of the cell cycle.</title>
        <authorList>
            <person name="Matsushime H."/>
            <person name="Roussel M.F."/>
            <person name="Ashmun R.A."/>
            <person name="Sherr C.J."/>
        </authorList>
    </citation>
    <scope>NUCLEOTIDE SEQUENCE [MRNA]</scope>
</reference>
<reference key="2">
    <citation type="journal article" date="1995" name="Genomics">
        <title>Genomic organization of the mouse cyclin D1 gene (Cyl-1).</title>
        <authorList>
            <person name="Smith R."/>
            <person name="Peters G."/>
            <person name="Dickson C."/>
        </authorList>
    </citation>
    <scope>NUCLEOTIDE SEQUENCE [MRNA]</scope>
</reference>
<reference key="3">
    <citation type="journal article" date="2004" name="Genome Res.">
        <title>The status, quality, and expansion of the NIH full-length cDNA project: the Mammalian Gene Collection (MGC).</title>
        <authorList>
            <consortium name="The MGC Project Team"/>
        </authorList>
    </citation>
    <scope>NUCLEOTIDE SEQUENCE [LARGE SCALE MRNA]</scope>
    <source>
        <strain>129</strain>
        <tissue>Mammary gland</tissue>
    </source>
</reference>
<reference key="4">
    <citation type="journal article" date="1995" name="Mol. Biol. Cell">
        <title>Redistribution of the CDK inhibitor p27 between different cyclin.CDK complexes in the mouse fibroblast cell cycle and in cells arrested with lovastatin or ultraviolet irradiation.</title>
        <authorList>
            <person name="Poon R.Y."/>
            <person name="Toyoshima H."/>
            <person name="Hunter T."/>
        </authorList>
    </citation>
    <scope>INTERACTION WITH CDKN1B IN THE CCND1-CDK4-CDKN1B COMPLEX</scope>
</reference>
<reference key="5">
    <citation type="journal article" date="2006" name="Mol. Cell">
        <title>Phosphorylation-dependent ubiquitination of cyclin D1 by the SCF(FBX4-alphaB crystallin) complex.</title>
        <authorList>
            <person name="Lin D.I."/>
            <person name="Barbash O."/>
            <person name="Kumar K.G."/>
            <person name="Weber J.D."/>
            <person name="Harper J.W."/>
            <person name="Klein-Szanto A.J."/>
            <person name="Rustgi A."/>
            <person name="Fuchs S.Y."/>
            <person name="Diehl J.A."/>
        </authorList>
    </citation>
    <scope>UBIQUITINATION</scope>
    <scope>INTERACTION WITH A UBIQUITIN LIGASE COMPLEX CONTAINING CRYAB</scope>
    <scope>SKP1</scope>
    <scope>CUL1 AND FBXO4</scope>
    <scope>MUTAGENESIS OF THR-286</scope>
    <scope>PHOSPHORYLATION AT THR-286</scope>
</reference>
<reference key="6">
    <citation type="journal article" date="2009" name="Oncogene">
        <title>Lysine 269 is essential for cyclin D1 ubiquitylation by the SCF(Fbx4/alphaB-crystallin) ligase and subsequent proteasome-dependent degradation.</title>
        <authorList>
            <person name="Barbash O."/>
            <person name="Egan E."/>
            <person name="Pontano L.L."/>
            <person name="Kosak J."/>
            <person name="Diehl J.A."/>
        </authorList>
    </citation>
    <scope>UBIQUITINATION AT LYS-269</scope>
    <scope>INTERACTION WITH CDKN1B AND CDK4</scope>
    <scope>SUBUNIT</scope>
    <scope>SUBCELLULAR LOCATION</scope>
    <scope>MUTAGENESIS OF LYS-269 AND THR-286</scope>
</reference>
<reference key="7">
    <citation type="journal article" date="2012" name="EMBO J.">
        <title>Nuclear receptor binding protein 1 regulates intestinal progenitor cell homeostasis and tumour formation.</title>
        <authorList>
            <person name="Wilson C.H."/>
            <person name="Crombie C."/>
            <person name="van der Weyden L."/>
            <person name="Poulogiannis G."/>
            <person name="Rust A.G."/>
            <person name="Pardo M."/>
            <person name="Gracia T."/>
            <person name="Yu L."/>
            <person name="Choudhary J."/>
            <person name="Poulin G.B."/>
            <person name="McIntyre R.E."/>
            <person name="Winton D.J."/>
            <person name="March H.N."/>
            <person name="Arends M.J."/>
            <person name="Fraser A.G."/>
            <person name="Adams D.J."/>
        </authorList>
    </citation>
    <scope>TISSUE SPECIFICITY</scope>
</reference>
<reference key="8">
    <citation type="journal article" date="2021" name="Nature">
        <title>AMBRA1 regulates cyclin D to guard S-phase entry and genomic integrity.</title>
        <authorList>
            <person name="Maiani E."/>
            <person name="Milletti G."/>
            <person name="Nazio F."/>
            <person name="Holdgaard S.G."/>
            <person name="Bartkova J."/>
            <person name="Rizza S."/>
            <person name="Cianfanelli V."/>
            <person name="Lorente M."/>
            <person name="Simoneschi D."/>
            <person name="Di Marco M."/>
            <person name="D'Acunzo P."/>
            <person name="Di Leo L."/>
            <person name="Rasmussen R."/>
            <person name="Montagna C."/>
            <person name="Raciti M."/>
            <person name="De Stefanis C."/>
            <person name="Gabicagogeascoa E."/>
            <person name="Rona G."/>
            <person name="Salvador N."/>
            <person name="Pupo E."/>
            <person name="Merchut-Maya J.M."/>
            <person name="Daniel C.J."/>
            <person name="Carinci M."/>
            <person name="Cesarini V."/>
            <person name="O'sullivan A."/>
            <person name="Jeong Y.T."/>
            <person name="Bordi M."/>
            <person name="Russo F."/>
            <person name="Campello S."/>
            <person name="Gallo A."/>
            <person name="Filomeni G."/>
            <person name="Lanzetti L."/>
            <person name="Sears R.C."/>
            <person name="Hamerlik P."/>
            <person name="Bartolazzi A."/>
            <person name="Hynds R.E."/>
            <person name="Pearce D.R."/>
            <person name="Swanton C."/>
            <person name="Pagano M."/>
            <person name="Velasco G."/>
            <person name="Papaleo E."/>
            <person name="De Zio D."/>
            <person name="Maya-Mendoza A."/>
            <person name="Locatelli F."/>
            <person name="Bartek J."/>
            <person name="Cecconi F."/>
        </authorList>
    </citation>
    <scope>UBIQUITINATION</scope>
</reference>
<feature type="chain" id="PRO_0000080431" description="G1/S-specific cyclin-D1">
    <location>
        <begin position="1"/>
        <end position="295"/>
    </location>
</feature>
<feature type="domain" description="Cyclin N-terminal">
    <location>
        <begin position="28"/>
        <end position="152"/>
    </location>
</feature>
<feature type="region of interest" description="Disordered" evidence="2">
    <location>
        <begin position="262"/>
        <end position="283"/>
    </location>
</feature>
<feature type="modified residue" description="Phosphothreonine" evidence="3">
    <location>
        <position position="286"/>
    </location>
</feature>
<feature type="cross-link" description="Glycyl lysine isopeptide (Lys-Gly) (interchain with G-Cter in ubiquitin)" evidence="4">
    <location>
        <position position="269"/>
    </location>
</feature>
<feature type="mutagenesis site" description="Promotes location to the nucleus. Reduces proteasomal degradation, but does not prevent ubiquitination." evidence="4">
    <original>K</original>
    <variation>R</variation>
    <location>
        <position position="269"/>
    </location>
</feature>
<feature type="mutagenesis site" description="Constitutively nuclear. Strongly reduced interaction with FBXO4. Strongly reduced ubiquitination." evidence="3 4">
    <original>T</original>
    <variation>A</variation>
    <location>
        <position position="286"/>
    </location>
</feature>
<gene>
    <name type="primary">Ccnd1</name>
    <name type="synonym">Cyl-1</name>
</gene>
<dbReference type="EMBL" id="M64403">
    <property type="protein sequence ID" value="AAA37502.1"/>
    <property type="molecule type" value="mRNA"/>
</dbReference>
<dbReference type="EMBL" id="S78355">
    <property type="protein sequence ID" value="AAB34495.1"/>
    <property type="molecule type" value="mRNA"/>
</dbReference>
<dbReference type="EMBL" id="BC044841">
    <property type="protein sequence ID" value="AAH44841.1"/>
    <property type="molecule type" value="mRNA"/>
</dbReference>
<dbReference type="CCDS" id="CCDS22055.1"/>
<dbReference type="PIR" id="A56523">
    <property type="entry name" value="A56523"/>
</dbReference>
<dbReference type="RefSeq" id="NP_031657.1">
    <property type="nucleotide sequence ID" value="NM_007631.3"/>
</dbReference>
<dbReference type="SMR" id="P25322"/>
<dbReference type="BioGRID" id="198548">
    <property type="interactions" value="18"/>
</dbReference>
<dbReference type="ComplexPortal" id="CPX-2073">
    <property type="entry name" value="Cyclin D1-CDK4 complex"/>
</dbReference>
<dbReference type="ComplexPortal" id="CPX-2080">
    <property type="entry name" value="Cyclin D1-CDK6 complex"/>
</dbReference>
<dbReference type="CORUM" id="P25322"/>
<dbReference type="DIP" id="DIP-284N"/>
<dbReference type="ELM" id="P25322"/>
<dbReference type="FunCoup" id="P25322">
    <property type="interactions" value="1903"/>
</dbReference>
<dbReference type="IntAct" id="P25322">
    <property type="interactions" value="22"/>
</dbReference>
<dbReference type="MINT" id="P25322"/>
<dbReference type="STRING" id="10090.ENSMUSP00000091495"/>
<dbReference type="BindingDB" id="P25322"/>
<dbReference type="GlyGen" id="P25322">
    <property type="glycosylation" value="1 site"/>
</dbReference>
<dbReference type="iPTMnet" id="P25322"/>
<dbReference type="PhosphoSitePlus" id="P25322"/>
<dbReference type="PaxDb" id="10090-ENSMUSP00000091495"/>
<dbReference type="PeptideAtlas" id="P25322"/>
<dbReference type="ProteomicsDB" id="281250"/>
<dbReference type="Pumba" id="P25322"/>
<dbReference type="Antibodypedia" id="3660">
    <property type="antibodies" value="2173 antibodies from 53 providers"/>
</dbReference>
<dbReference type="DNASU" id="12443"/>
<dbReference type="Ensembl" id="ENSMUST00000093962.5">
    <property type="protein sequence ID" value="ENSMUSP00000091495.5"/>
    <property type="gene ID" value="ENSMUSG00000070348.6"/>
</dbReference>
<dbReference type="GeneID" id="12443"/>
<dbReference type="KEGG" id="mmu:12443"/>
<dbReference type="UCSC" id="uc009kqt.1">
    <property type="organism name" value="mouse"/>
</dbReference>
<dbReference type="AGR" id="MGI:88313"/>
<dbReference type="CTD" id="595"/>
<dbReference type="MGI" id="MGI:88313">
    <property type="gene designation" value="Ccnd1"/>
</dbReference>
<dbReference type="VEuPathDB" id="HostDB:ENSMUSG00000070348"/>
<dbReference type="eggNOG" id="KOG0656">
    <property type="taxonomic scope" value="Eukaryota"/>
</dbReference>
<dbReference type="GeneTree" id="ENSGT00940000157816"/>
<dbReference type="HOGENOM" id="CLU_052190_0_0_1"/>
<dbReference type="InParanoid" id="P25322"/>
<dbReference type="OMA" id="PCELLQM"/>
<dbReference type="OrthoDB" id="306099at2759"/>
<dbReference type="PhylomeDB" id="P25322"/>
<dbReference type="TreeFam" id="TF101004"/>
<dbReference type="Reactome" id="R-MMU-187577">
    <property type="pathway name" value="SCF(Skp2)-mediated degradation of p27/p21"/>
</dbReference>
<dbReference type="Reactome" id="R-MMU-3214858">
    <property type="pathway name" value="RMTs methylate histone arginines"/>
</dbReference>
<dbReference type="Reactome" id="R-MMU-69231">
    <property type="pathway name" value="Cyclin D associated events in G1"/>
</dbReference>
<dbReference type="Reactome" id="R-MMU-75815">
    <property type="pathway name" value="Ubiquitin-dependent degradation of Cyclin D"/>
</dbReference>
<dbReference type="Reactome" id="R-MMU-8849470">
    <property type="pathway name" value="PTK6 Regulates Cell Cycle"/>
</dbReference>
<dbReference type="Reactome" id="R-MMU-8878166">
    <property type="pathway name" value="Transcriptional regulation by RUNX2"/>
</dbReference>
<dbReference type="Reactome" id="R-MMU-8934593">
    <property type="pathway name" value="Regulation of RUNX1 Expression and Activity"/>
</dbReference>
<dbReference type="Reactome" id="R-MMU-8951936">
    <property type="pathway name" value="RUNX3 regulates p14-ARF"/>
</dbReference>
<dbReference type="Reactome" id="R-MMU-9754119">
    <property type="pathway name" value="Drug-mediated inhibition of CDK4/CDK6 activity"/>
</dbReference>
<dbReference type="BioGRID-ORCS" id="12443">
    <property type="hits" value="9 hits in 77 CRISPR screens"/>
</dbReference>
<dbReference type="ChiTaRS" id="Ccnd1">
    <property type="organism name" value="mouse"/>
</dbReference>
<dbReference type="PRO" id="PR:P25322"/>
<dbReference type="Proteomes" id="UP000000589">
    <property type="component" value="Chromosome 7"/>
</dbReference>
<dbReference type="RNAct" id="P25322">
    <property type="molecule type" value="protein"/>
</dbReference>
<dbReference type="Bgee" id="ENSMUSG00000070348">
    <property type="expression patterns" value="Expressed in vault of skull and 317 other cell types or tissues"/>
</dbReference>
<dbReference type="ExpressionAtlas" id="P25322">
    <property type="expression patterns" value="baseline and differential"/>
</dbReference>
<dbReference type="GO" id="GO:0005923">
    <property type="term" value="C:bicellular tight junction"/>
    <property type="evidence" value="ECO:0000314"/>
    <property type="project" value="MGI"/>
</dbReference>
<dbReference type="GO" id="GO:0097128">
    <property type="term" value="C:cyclin D1-CDK4 complex"/>
    <property type="evidence" value="ECO:0000353"/>
    <property type="project" value="ComplexPortal"/>
</dbReference>
<dbReference type="GO" id="GO:0097131">
    <property type="term" value="C:cyclin D1-CDK6 complex"/>
    <property type="evidence" value="ECO:0007669"/>
    <property type="project" value="Ensembl"/>
</dbReference>
<dbReference type="GO" id="GO:0000307">
    <property type="term" value="C:cyclin-dependent protein kinase holoenzyme complex"/>
    <property type="evidence" value="ECO:0000353"/>
    <property type="project" value="UniProtKB"/>
</dbReference>
<dbReference type="GO" id="GO:0005737">
    <property type="term" value="C:cytoplasm"/>
    <property type="evidence" value="ECO:0000314"/>
    <property type="project" value="MGI"/>
</dbReference>
<dbReference type="GO" id="GO:0005829">
    <property type="term" value="C:cytosol"/>
    <property type="evidence" value="ECO:0000304"/>
    <property type="project" value="Reactome"/>
</dbReference>
<dbReference type="GO" id="GO:0031965">
    <property type="term" value="C:nuclear membrane"/>
    <property type="evidence" value="ECO:0007669"/>
    <property type="project" value="UniProtKB-SubCell"/>
</dbReference>
<dbReference type="GO" id="GO:0005654">
    <property type="term" value="C:nucleoplasm"/>
    <property type="evidence" value="ECO:0000304"/>
    <property type="project" value="Reactome"/>
</dbReference>
<dbReference type="GO" id="GO:0005634">
    <property type="term" value="C:nucleus"/>
    <property type="evidence" value="ECO:0000314"/>
    <property type="project" value="UniProtKB"/>
</dbReference>
<dbReference type="GO" id="GO:0017053">
    <property type="term" value="C:transcription repressor complex"/>
    <property type="evidence" value="ECO:0000250"/>
    <property type="project" value="UniProtKB"/>
</dbReference>
<dbReference type="GO" id="GO:0061575">
    <property type="term" value="F:cyclin-dependent protein serine/threonine kinase activator activity"/>
    <property type="evidence" value="ECO:0007669"/>
    <property type="project" value="Ensembl"/>
</dbReference>
<dbReference type="GO" id="GO:0016538">
    <property type="term" value="F:cyclin-dependent protein serine/threonine kinase regulator activity"/>
    <property type="evidence" value="ECO:0000314"/>
    <property type="project" value="MGI"/>
</dbReference>
<dbReference type="GO" id="GO:0042826">
    <property type="term" value="F:histone deacetylase binding"/>
    <property type="evidence" value="ECO:0007669"/>
    <property type="project" value="Ensembl"/>
</dbReference>
<dbReference type="GO" id="GO:0016301">
    <property type="term" value="F:kinase activity"/>
    <property type="evidence" value="ECO:0000314"/>
    <property type="project" value="MGI"/>
</dbReference>
<dbReference type="GO" id="GO:0070064">
    <property type="term" value="F:proline-rich region binding"/>
    <property type="evidence" value="ECO:0007669"/>
    <property type="project" value="Ensembl"/>
</dbReference>
<dbReference type="GO" id="GO:0004672">
    <property type="term" value="F:protein kinase activity"/>
    <property type="evidence" value="ECO:0000314"/>
    <property type="project" value="MGI"/>
</dbReference>
<dbReference type="GO" id="GO:0019901">
    <property type="term" value="F:protein kinase binding"/>
    <property type="evidence" value="ECO:0000353"/>
    <property type="project" value="UniProtKB"/>
</dbReference>
<dbReference type="GO" id="GO:0043539">
    <property type="term" value="F:protein serine/threonine kinase activator activity"/>
    <property type="evidence" value="ECO:0000250"/>
    <property type="project" value="UniProtKB"/>
</dbReference>
<dbReference type="GO" id="GO:0044877">
    <property type="term" value="F:protein-containing complex binding"/>
    <property type="evidence" value="ECO:0007669"/>
    <property type="project" value="Ensembl"/>
</dbReference>
<dbReference type="GO" id="GO:0003714">
    <property type="term" value="F:transcription corepressor activity"/>
    <property type="evidence" value="ECO:0000250"/>
    <property type="project" value="UniProtKB"/>
</dbReference>
<dbReference type="GO" id="GO:0051301">
    <property type="term" value="P:cell division"/>
    <property type="evidence" value="ECO:0007669"/>
    <property type="project" value="UniProtKB-KW"/>
</dbReference>
<dbReference type="GO" id="GO:0008283">
    <property type="term" value="P:cell population proliferation"/>
    <property type="evidence" value="ECO:0000315"/>
    <property type="project" value="MGI"/>
</dbReference>
<dbReference type="GO" id="GO:0006974">
    <property type="term" value="P:DNA damage response"/>
    <property type="evidence" value="ECO:0000250"/>
    <property type="project" value="UniProtKB"/>
</dbReference>
<dbReference type="GO" id="GO:0030968">
    <property type="term" value="P:endoplasmic reticulum unfolded protein response"/>
    <property type="evidence" value="ECO:0000314"/>
    <property type="project" value="MGI"/>
</dbReference>
<dbReference type="GO" id="GO:0045444">
    <property type="term" value="P:fat cell differentiation"/>
    <property type="evidence" value="ECO:0000314"/>
    <property type="project" value="MGI"/>
</dbReference>
<dbReference type="GO" id="GO:0000082">
    <property type="term" value="P:G1/S transition of mitotic cell cycle"/>
    <property type="evidence" value="ECO:0000314"/>
    <property type="project" value="MGI"/>
</dbReference>
<dbReference type="GO" id="GO:0007595">
    <property type="term" value="P:lactation"/>
    <property type="evidence" value="ECO:0000315"/>
    <property type="project" value="MGI"/>
</dbReference>
<dbReference type="GO" id="GO:0033327">
    <property type="term" value="P:Leydig cell differentiation"/>
    <property type="evidence" value="ECO:0007669"/>
    <property type="project" value="Ensembl"/>
</dbReference>
<dbReference type="GO" id="GO:0097421">
    <property type="term" value="P:liver regeneration"/>
    <property type="evidence" value="ECO:0000314"/>
    <property type="project" value="MGI"/>
</dbReference>
<dbReference type="GO" id="GO:0060749">
    <property type="term" value="P:mammary gland alveolus development"/>
    <property type="evidence" value="ECO:0000315"/>
    <property type="project" value="MGI"/>
</dbReference>
<dbReference type="GO" id="GO:0033598">
    <property type="term" value="P:mammary gland epithelial cell proliferation"/>
    <property type="evidence" value="ECO:0000316"/>
    <property type="project" value="MGI"/>
</dbReference>
<dbReference type="GO" id="GO:0031571">
    <property type="term" value="P:mitotic G1 DNA damage checkpoint signaling"/>
    <property type="evidence" value="ECO:0000250"/>
    <property type="project" value="UniProtKB"/>
</dbReference>
<dbReference type="GO" id="GO:0030857">
    <property type="term" value="P:negative regulation of epithelial cell differentiation"/>
    <property type="evidence" value="ECO:0000316"/>
    <property type="project" value="MGI"/>
</dbReference>
<dbReference type="GO" id="GO:0043524">
    <property type="term" value="P:negative regulation of neuron apoptotic process"/>
    <property type="evidence" value="ECO:0000315"/>
    <property type="project" value="MGI"/>
</dbReference>
<dbReference type="GO" id="GO:0000122">
    <property type="term" value="P:negative regulation of transcription by RNA polymerase II"/>
    <property type="evidence" value="ECO:0000316"/>
    <property type="project" value="MGI"/>
</dbReference>
<dbReference type="GO" id="GO:0030182">
    <property type="term" value="P:neuron differentiation"/>
    <property type="evidence" value="ECO:0000315"/>
    <property type="project" value="MGI"/>
</dbReference>
<dbReference type="GO" id="GO:0010971">
    <property type="term" value="P:positive regulation of G2/M transition of mitotic cell cycle"/>
    <property type="evidence" value="ECO:0000250"/>
    <property type="project" value="UniProtKB"/>
</dbReference>
<dbReference type="GO" id="GO:0033601">
    <property type="term" value="P:positive regulation of mammary gland epithelial cell proliferation"/>
    <property type="evidence" value="ECO:0000316"/>
    <property type="project" value="MGI"/>
</dbReference>
<dbReference type="GO" id="GO:0000320">
    <property type="term" value="P:re-entry into mitotic cell cycle"/>
    <property type="evidence" value="ECO:0000314"/>
    <property type="project" value="MGI"/>
</dbReference>
<dbReference type="GO" id="GO:0051726">
    <property type="term" value="P:regulation of cell cycle"/>
    <property type="evidence" value="ECO:0000314"/>
    <property type="project" value="MGI"/>
</dbReference>
<dbReference type="GO" id="GO:2000045">
    <property type="term" value="P:regulation of G1/S transition of mitotic cell cycle"/>
    <property type="evidence" value="ECO:0000316"/>
    <property type="project" value="MGI"/>
</dbReference>
<dbReference type="GO" id="GO:0051592">
    <property type="term" value="P:response to calcium ion"/>
    <property type="evidence" value="ECO:0007669"/>
    <property type="project" value="Ensembl"/>
</dbReference>
<dbReference type="GO" id="GO:0051412">
    <property type="term" value="P:response to corticosterone"/>
    <property type="evidence" value="ECO:0007669"/>
    <property type="project" value="Ensembl"/>
</dbReference>
<dbReference type="GO" id="GO:0032355">
    <property type="term" value="P:response to estradiol"/>
    <property type="evidence" value="ECO:0007669"/>
    <property type="project" value="Ensembl"/>
</dbReference>
<dbReference type="GO" id="GO:0043627">
    <property type="term" value="P:response to estrogen"/>
    <property type="evidence" value="ECO:0007669"/>
    <property type="project" value="Ensembl"/>
</dbReference>
<dbReference type="GO" id="GO:0045471">
    <property type="term" value="P:response to ethanol"/>
    <property type="evidence" value="ECO:0007669"/>
    <property type="project" value="Ensembl"/>
</dbReference>
<dbReference type="GO" id="GO:0010039">
    <property type="term" value="P:response to iron ion"/>
    <property type="evidence" value="ECO:0007669"/>
    <property type="project" value="Ensembl"/>
</dbReference>
<dbReference type="GO" id="GO:0044321">
    <property type="term" value="P:response to leptin"/>
    <property type="evidence" value="ECO:0007669"/>
    <property type="project" value="Ensembl"/>
</dbReference>
<dbReference type="GO" id="GO:0032026">
    <property type="term" value="P:response to magnesium ion"/>
    <property type="evidence" value="ECO:0007669"/>
    <property type="project" value="Ensembl"/>
</dbReference>
<dbReference type="GO" id="GO:0070141">
    <property type="term" value="P:response to UV-A"/>
    <property type="evidence" value="ECO:0000250"/>
    <property type="project" value="UniProtKB"/>
</dbReference>
<dbReference type="GO" id="GO:0033197">
    <property type="term" value="P:response to vitamin E"/>
    <property type="evidence" value="ECO:0007669"/>
    <property type="project" value="Ensembl"/>
</dbReference>
<dbReference type="GO" id="GO:0010165">
    <property type="term" value="P:response to X-ray"/>
    <property type="evidence" value="ECO:0007669"/>
    <property type="project" value="Ensembl"/>
</dbReference>
<dbReference type="GO" id="GO:0009410">
    <property type="term" value="P:response to xenobiotic stimulus"/>
    <property type="evidence" value="ECO:0007669"/>
    <property type="project" value="Ensembl"/>
</dbReference>
<dbReference type="GO" id="GO:0016055">
    <property type="term" value="P:Wnt signaling pathway"/>
    <property type="evidence" value="ECO:0000314"/>
    <property type="project" value="MGI"/>
</dbReference>
<dbReference type="CDD" id="cd20573">
    <property type="entry name" value="CYCLIN_CCND1_rpt1"/>
    <property type="match status" value="1"/>
</dbReference>
<dbReference type="CDD" id="cd20576">
    <property type="entry name" value="CYCLIN_CCND1_rpt2"/>
    <property type="match status" value="1"/>
</dbReference>
<dbReference type="FunFam" id="1.10.472.10:FF:000120">
    <property type="entry name" value="G1/S-specific cyclin-D1"/>
    <property type="match status" value="1"/>
</dbReference>
<dbReference type="Gene3D" id="1.10.472.10">
    <property type="entry name" value="Cyclin-like"/>
    <property type="match status" value="2"/>
</dbReference>
<dbReference type="InterPro" id="IPR039361">
    <property type="entry name" value="Cyclin"/>
</dbReference>
<dbReference type="InterPro" id="IPR013763">
    <property type="entry name" value="Cyclin-like_dom"/>
</dbReference>
<dbReference type="InterPro" id="IPR036915">
    <property type="entry name" value="Cyclin-like_sf"/>
</dbReference>
<dbReference type="InterPro" id="IPR004367">
    <property type="entry name" value="Cyclin_C-dom"/>
</dbReference>
<dbReference type="InterPro" id="IPR006671">
    <property type="entry name" value="Cyclin_N"/>
</dbReference>
<dbReference type="InterPro" id="IPR048258">
    <property type="entry name" value="Cyclins_cyclin-box"/>
</dbReference>
<dbReference type="PANTHER" id="PTHR10177">
    <property type="entry name" value="CYCLINS"/>
    <property type="match status" value="1"/>
</dbReference>
<dbReference type="Pfam" id="PF02984">
    <property type="entry name" value="Cyclin_C"/>
    <property type="match status" value="1"/>
</dbReference>
<dbReference type="Pfam" id="PF00134">
    <property type="entry name" value="Cyclin_N"/>
    <property type="match status" value="1"/>
</dbReference>
<dbReference type="SMART" id="SM00385">
    <property type="entry name" value="CYCLIN"/>
    <property type="match status" value="2"/>
</dbReference>
<dbReference type="SMART" id="SM01332">
    <property type="entry name" value="Cyclin_C"/>
    <property type="match status" value="1"/>
</dbReference>
<dbReference type="SUPFAM" id="SSF47954">
    <property type="entry name" value="Cyclin-like"/>
    <property type="match status" value="2"/>
</dbReference>
<dbReference type="PROSITE" id="PS00292">
    <property type="entry name" value="CYCLINS"/>
    <property type="match status" value="1"/>
</dbReference>
<protein>
    <recommendedName>
        <fullName>G1/S-specific cyclin-D1</fullName>
    </recommendedName>
</protein>
<evidence type="ECO:0000250" key="1">
    <source>
        <dbReference type="UniProtKB" id="P24385"/>
    </source>
</evidence>
<evidence type="ECO:0000256" key="2">
    <source>
        <dbReference type="SAM" id="MobiDB-lite"/>
    </source>
</evidence>
<evidence type="ECO:0000269" key="3">
    <source>
    </source>
</evidence>
<evidence type="ECO:0000269" key="4">
    <source>
    </source>
</evidence>
<evidence type="ECO:0000269" key="5">
    <source>
    </source>
</evidence>
<evidence type="ECO:0000269" key="6">
    <source>
    </source>
</evidence>
<evidence type="ECO:0000269" key="7">
    <source>
    </source>
</evidence>
<evidence type="ECO:0000305" key="8"/>
<keyword id="KW-0131">Cell cycle</keyword>
<keyword id="KW-0132">Cell division</keyword>
<keyword id="KW-0195">Cyclin</keyword>
<keyword id="KW-0963">Cytoplasm</keyword>
<keyword id="KW-1017">Isopeptide bond</keyword>
<keyword id="KW-0472">Membrane</keyword>
<keyword id="KW-0539">Nucleus</keyword>
<keyword id="KW-0597">Phosphoprotein</keyword>
<keyword id="KW-1185">Reference proteome</keyword>
<keyword id="KW-0678">Repressor</keyword>
<keyword id="KW-0804">Transcription</keyword>
<keyword id="KW-0805">Transcription regulation</keyword>
<keyword id="KW-0832">Ubl conjugation</keyword>